<name>VF205_ASFK5</name>
<gene>
    <name type="ordered locus">Ken-060</name>
</gene>
<protein>
    <recommendedName>
        <fullName>Uncharacterized protein K205R</fullName>
        <shortName>pK205R</shortName>
    </recommendedName>
</protein>
<feature type="chain" id="PRO_0000373587" description="Uncharacterized protein K205R">
    <location>
        <begin position="1"/>
        <end position="209"/>
    </location>
</feature>
<feature type="region of interest" description="Disordered" evidence="3">
    <location>
        <begin position="103"/>
        <end position="131"/>
    </location>
</feature>
<feature type="coiled-coil region" evidence="2">
    <location>
        <begin position="39"/>
        <end position="75"/>
    </location>
</feature>
<feature type="compositionally biased region" description="Polar residues" evidence="3">
    <location>
        <begin position="116"/>
        <end position="129"/>
    </location>
</feature>
<organismHost>
    <name type="scientific">Ornithodoros</name>
    <name type="common">relapsing fever ticks</name>
    <dbReference type="NCBI Taxonomy" id="6937"/>
</organismHost>
<organismHost>
    <name type="scientific">Phacochoerus aethiopicus</name>
    <name type="common">Warthog</name>
    <dbReference type="NCBI Taxonomy" id="85517"/>
</organismHost>
<organismHost>
    <name type="scientific">Phacochoerus africanus</name>
    <name type="common">Warthog</name>
    <dbReference type="NCBI Taxonomy" id="41426"/>
</organismHost>
<organismHost>
    <name type="scientific">Potamochoerus larvatus</name>
    <name type="common">Bushpig</name>
    <dbReference type="NCBI Taxonomy" id="273792"/>
</organismHost>
<organismHost>
    <name type="scientific">Sus scrofa</name>
    <name type="common">Pig</name>
    <dbReference type="NCBI Taxonomy" id="9823"/>
</organismHost>
<proteinExistence type="inferred from homology"/>
<accession>P0CA97</accession>
<evidence type="ECO:0000250" key="1">
    <source>
        <dbReference type="UniProtKB" id="Q65147"/>
    </source>
</evidence>
<evidence type="ECO:0000255" key="2"/>
<evidence type="ECO:0000256" key="3">
    <source>
        <dbReference type="SAM" id="MobiDB-lite"/>
    </source>
</evidence>
<evidence type="ECO:0000305" key="4"/>
<sequence>MVEPREQFFQDLLSAVDKQMDTVKNDIIDVMKEKTSFLVSFENFMERYDTMEKNIQDLQNKYEEMANNLVAVMADTKIQLGAIIAQLEIIMVNGTPLPAKKTTMKDATSLPPPNPNNEQSVFTNGSPTSGKIGETVKKNLTNAMFFTRSEWASSEPFRQKFLTPEIQAILDEQFANKTGIERLHAEGLYMWRTQFSDEQKKMVKEMMKK</sequence>
<dbReference type="EMBL" id="AY261360">
    <property type="status" value="NOT_ANNOTATED_CDS"/>
    <property type="molecule type" value="Genomic_DNA"/>
</dbReference>
<dbReference type="SMR" id="P0CA97"/>
<dbReference type="Proteomes" id="UP000000861">
    <property type="component" value="Segment"/>
</dbReference>
<dbReference type="GO" id="GO:0030430">
    <property type="term" value="C:host cell cytoplasm"/>
    <property type="evidence" value="ECO:0007669"/>
    <property type="project" value="UniProtKB-SubCell"/>
</dbReference>
<dbReference type="GO" id="GO:0039520">
    <property type="term" value="P:symbiont-mediated activation of host autophagy"/>
    <property type="evidence" value="ECO:0007669"/>
    <property type="project" value="UniProtKB-KW"/>
</dbReference>
<comment type="function">
    <text evidence="1">Induces host endoplasmic reticulum stress and consequently activates autophagy and NF-kappa-B signaling pathway. In turn, may induce autophagy-mediated STING1 degradation and innate immune evasion.</text>
</comment>
<comment type="subcellular location">
    <subcellularLocation>
        <location evidence="1">Host cytoplasm</location>
    </subcellularLocation>
</comment>
<comment type="induction">
    <text evidence="4">Expressed in the early phase of the viral replicative cycle.</text>
</comment>
<comment type="similarity">
    <text evidence="4">Belongs to the asfivirus K205R family.</text>
</comment>
<reference key="1">
    <citation type="submission" date="2003-03" db="EMBL/GenBank/DDBJ databases">
        <title>African swine fever virus genomes.</title>
        <authorList>
            <person name="Kutish G.F."/>
            <person name="Rock D.L."/>
        </authorList>
    </citation>
    <scope>NUCLEOTIDE SEQUENCE [LARGE SCALE GENOMIC DNA]</scope>
</reference>
<organism>
    <name type="scientific">African swine fever virus (isolate Pig/Kenya/KEN-50/1950)</name>
    <name type="common">ASFV</name>
    <dbReference type="NCBI Taxonomy" id="561445"/>
    <lineage>
        <taxon>Viruses</taxon>
        <taxon>Varidnaviria</taxon>
        <taxon>Bamfordvirae</taxon>
        <taxon>Nucleocytoviricota</taxon>
        <taxon>Pokkesviricetes</taxon>
        <taxon>Asfuvirales</taxon>
        <taxon>Asfarviridae</taxon>
        <taxon>Asfivirus</taxon>
        <taxon>African swine fever virus</taxon>
    </lineage>
</organism>
<keyword id="KW-1072">Activation of host autophagy by virus</keyword>
<keyword id="KW-0175">Coiled coil</keyword>
<keyword id="KW-0244">Early protein</keyword>
<keyword id="KW-1035">Host cytoplasm</keyword>
<keyword id="KW-0945">Host-virus interaction</keyword>